<keyword id="KW-1185">Reference proteome</keyword>
<protein>
    <recommendedName>
        <fullName evidence="1">UPF0250 protein IL0958</fullName>
    </recommendedName>
</protein>
<comment type="similarity">
    <text evidence="1">Belongs to the UPF0250 family.</text>
</comment>
<organism>
    <name type="scientific">Idiomarina loihiensis (strain ATCC BAA-735 / DSM 15497 / L2-TR)</name>
    <dbReference type="NCBI Taxonomy" id="283942"/>
    <lineage>
        <taxon>Bacteria</taxon>
        <taxon>Pseudomonadati</taxon>
        <taxon>Pseudomonadota</taxon>
        <taxon>Gammaproteobacteria</taxon>
        <taxon>Alteromonadales</taxon>
        <taxon>Idiomarinaceae</taxon>
        <taxon>Idiomarina</taxon>
    </lineage>
</organism>
<dbReference type="EMBL" id="AE017340">
    <property type="protein sequence ID" value="AAV81798.1"/>
    <property type="molecule type" value="Genomic_DNA"/>
</dbReference>
<dbReference type="SMR" id="Q5QYE7"/>
<dbReference type="STRING" id="283942.IL0958"/>
<dbReference type="GeneID" id="41336118"/>
<dbReference type="KEGG" id="ilo:IL0958"/>
<dbReference type="eggNOG" id="COG2921">
    <property type="taxonomic scope" value="Bacteria"/>
</dbReference>
<dbReference type="HOGENOM" id="CLU_161438_2_1_6"/>
<dbReference type="OrthoDB" id="9793424at2"/>
<dbReference type="Proteomes" id="UP000001171">
    <property type="component" value="Chromosome"/>
</dbReference>
<dbReference type="GO" id="GO:0005829">
    <property type="term" value="C:cytosol"/>
    <property type="evidence" value="ECO:0007669"/>
    <property type="project" value="TreeGrafter"/>
</dbReference>
<dbReference type="Gene3D" id="3.30.70.260">
    <property type="match status" value="1"/>
</dbReference>
<dbReference type="HAMAP" id="MF_00659">
    <property type="entry name" value="UPF0250"/>
    <property type="match status" value="1"/>
</dbReference>
<dbReference type="InterPro" id="IPR007454">
    <property type="entry name" value="UPF0250_YbeD-like"/>
</dbReference>
<dbReference type="InterPro" id="IPR027471">
    <property type="entry name" value="YbeD-like_sf"/>
</dbReference>
<dbReference type="NCBIfam" id="NF003447">
    <property type="entry name" value="PRK04998.1"/>
    <property type="match status" value="1"/>
</dbReference>
<dbReference type="PANTHER" id="PTHR38036">
    <property type="entry name" value="UPF0250 PROTEIN YBED"/>
    <property type="match status" value="1"/>
</dbReference>
<dbReference type="PANTHER" id="PTHR38036:SF1">
    <property type="entry name" value="UPF0250 PROTEIN YBED"/>
    <property type="match status" value="1"/>
</dbReference>
<dbReference type="Pfam" id="PF04359">
    <property type="entry name" value="DUF493"/>
    <property type="match status" value="1"/>
</dbReference>
<dbReference type="SUPFAM" id="SSF117991">
    <property type="entry name" value="YbeD/HP0495-like"/>
    <property type="match status" value="1"/>
</dbReference>
<accession>Q5QYE7</accession>
<reference key="1">
    <citation type="journal article" date="2004" name="Proc. Natl. Acad. Sci. U.S.A.">
        <title>Genome sequence of the deep-sea gamma-proteobacterium Idiomarina loihiensis reveals amino acid fermentation as a source of carbon and energy.</title>
        <authorList>
            <person name="Hou S."/>
            <person name="Saw J.H."/>
            <person name="Lee K.S."/>
            <person name="Freitas T.A."/>
            <person name="Belisle C."/>
            <person name="Kawarabayasi Y."/>
            <person name="Donachie S.P."/>
            <person name="Pikina A."/>
            <person name="Galperin M.Y."/>
            <person name="Koonin E.V."/>
            <person name="Makarova K.S."/>
            <person name="Omelchenko M.V."/>
            <person name="Sorokin A."/>
            <person name="Wolf Y.I."/>
            <person name="Li Q.X."/>
            <person name="Keum Y.S."/>
            <person name="Campbell S."/>
            <person name="Denery J."/>
            <person name="Aizawa S."/>
            <person name="Shibata S."/>
            <person name="Malahoff A."/>
            <person name="Alam M."/>
        </authorList>
    </citation>
    <scope>NUCLEOTIDE SEQUENCE [LARGE SCALE GENOMIC DNA]</scope>
    <source>
        <strain>ATCC BAA-735 / DSM 15497 / L2-TR</strain>
    </source>
</reference>
<evidence type="ECO:0000255" key="1">
    <source>
        <dbReference type="HAMAP-Rule" id="MF_00659"/>
    </source>
</evidence>
<proteinExistence type="inferred from homology"/>
<gene>
    <name type="ordered locus">IL0958</name>
</gene>
<feature type="chain" id="PRO_1000061873" description="UPF0250 protein IL0958">
    <location>
        <begin position="1"/>
        <end position="88"/>
    </location>
</feature>
<sequence length="88" mass="9997">MQKTRFDELVDFPCHFTFKVMGVASDSLPDQVVEVLQEHAPGDYSPSVKPSSKGNYHSISVAVRVESQQHIEILYRSLSDIEDVRYVL</sequence>
<name>Y958_IDILO</name>